<dbReference type="EMBL" id="FM204884">
    <property type="protein sequence ID" value="CAW98647.1"/>
    <property type="molecule type" value="Genomic_DNA"/>
</dbReference>
<dbReference type="SMR" id="C0MCZ5"/>
<dbReference type="KEGG" id="seq:SZO_06100"/>
<dbReference type="eggNOG" id="COG3091">
    <property type="taxonomic scope" value="Bacteria"/>
</dbReference>
<dbReference type="HOGENOM" id="CLU_123820_0_0_9"/>
<dbReference type="Proteomes" id="UP000001368">
    <property type="component" value="Chromosome"/>
</dbReference>
<dbReference type="GO" id="GO:0005737">
    <property type="term" value="C:cytoplasm"/>
    <property type="evidence" value="ECO:0007669"/>
    <property type="project" value="UniProtKB-SubCell"/>
</dbReference>
<dbReference type="GO" id="GO:0008270">
    <property type="term" value="F:zinc ion binding"/>
    <property type="evidence" value="ECO:0007669"/>
    <property type="project" value="UniProtKB-UniRule"/>
</dbReference>
<dbReference type="GO" id="GO:0006950">
    <property type="term" value="P:response to stress"/>
    <property type="evidence" value="ECO:0007669"/>
    <property type="project" value="UniProtKB-ARBA"/>
</dbReference>
<dbReference type="HAMAP" id="MF_00745">
    <property type="entry name" value="SprT_like"/>
    <property type="match status" value="1"/>
</dbReference>
<dbReference type="InterPro" id="IPR006640">
    <property type="entry name" value="SprT-like_domain"/>
</dbReference>
<dbReference type="InterPro" id="IPR023524">
    <property type="entry name" value="Uncharacterised_SprT-like"/>
</dbReference>
<dbReference type="NCBIfam" id="NF003339">
    <property type="entry name" value="PRK04351.1"/>
    <property type="match status" value="1"/>
</dbReference>
<dbReference type="Pfam" id="PF10263">
    <property type="entry name" value="SprT-like"/>
    <property type="match status" value="1"/>
</dbReference>
<dbReference type="SMART" id="SM00731">
    <property type="entry name" value="SprT"/>
    <property type="match status" value="1"/>
</dbReference>
<keyword id="KW-0963">Cytoplasm</keyword>
<keyword id="KW-0479">Metal-binding</keyword>
<keyword id="KW-0862">Zinc</keyword>
<reference key="1">
    <citation type="journal article" date="2009" name="PLoS Pathog.">
        <title>Genomic evidence for the evolution of Streptococcus equi: host restriction, increased virulence, and genetic exchange with human pathogens.</title>
        <authorList>
            <person name="Holden M.T.G."/>
            <person name="Heather Z."/>
            <person name="Paillot R."/>
            <person name="Steward K.F."/>
            <person name="Webb K."/>
            <person name="Ainslie F."/>
            <person name="Jourdan T."/>
            <person name="Bason N.C."/>
            <person name="Holroyd N.E."/>
            <person name="Mungall K."/>
            <person name="Quail M.A."/>
            <person name="Sanders M."/>
            <person name="Simmonds M."/>
            <person name="Willey D."/>
            <person name="Brooks K."/>
            <person name="Aanensen D.M."/>
            <person name="Spratt B.G."/>
            <person name="Jolley K.A."/>
            <person name="Maiden M.C.J."/>
            <person name="Kehoe M."/>
            <person name="Chanter N."/>
            <person name="Bentley S.D."/>
            <person name="Robinson C."/>
            <person name="Maskell D.J."/>
            <person name="Parkhill J."/>
            <person name="Waller A.S."/>
        </authorList>
    </citation>
    <scope>NUCLEOTIDE SEQUENCE [LARGE SCALE GENOMIC DNA]</scope>
    <source>
        <strain>H70</strain>
    </source>
</reference>
<accession>C0MCZ5</accession>
<gene>
    <name type="ordered locus">SZO_06100</name>
</gene>
<proteinExistence type="inferred from homology"/>
<name>SPRTL_STRS7</name>
<evidence type="ECO:0000255" key="1">
    <source>
        <dbReference type="HAMAP-Rule" id="MF_00745"/>
    </source>
</evidence>
<organism>
    <name type="scientific">Streptococcus equi subsp. zooepidemicus (strain H70)</name>
    <dbReference type="NCBI Taxonomy" id="553483"/>
    <lineage>
        <taxon>Bacteria</taxon>
        <taxon>Bacillati</taxon>
        <taxon>Bacillota</taxon>
        <taxon>Bacilli</taxon>
        <taxon>Lactobacillales</taxon>
        <taxon>Streptococcaceae</taxon>
        <taxon>Streptococcus</taxon>
    </lineage>
</organism>
<sequence length="145" mass="17052">MTLTDYVREVSLADFGKPFKHQASWNRRLRTTGGRFFPKDGHLDFNPKILEEHGETVFRQIVRHELCHYHLYFEGLGFRHKDQAFKELLAQVDGLRYAPRLQSHQANYLYICQDCGQAYDRKRPINLAVFACGRCHGRLIKKNQS</sequence>
<protein>
    <recommendedName>
        <fullName evidence="1">Protein SprT-like</fullName>
    </recommendedName>
</protein>
<comment type="cofactor">
    <cofactor evidence="1">
        <name>Zn(2+)</name>
        <dbReference type="ChEBI" id="CHEBI:29105"/>
    </cofactor>
    <text evidence="1">Binds 1 zinc ion.</text>
</comment>
<comment type="subcellular location">
    <subcellularLocation>
        <location evidence="1">Cytoplasm</location>
    </subcellularLocation>
</comment>
<comment type="similarity">
    <text evidence="1">Belongs to the SprT family.</text>
</comment>
<feature type="chain" id="PRO_1000212839" description="Protein SprT-like">
    <location>
        <begin position="1"/>
        <end position="145"/>
    </location>
</feature>
<feature type="domain" description="SprT-like" evidence="1">
    <location>
        <begin position="5"/>
        <end position="141"/>
    </location>
</feature>
<feature type="active site" evidence="1">
    <location>
        <position position="65"/>
    </location>
</feature>
<feature type="binding site" evidence="1">
    <location>
        <position position="64"/>
    </location>
    <ligand>
        <name>Zn(2+)</name>
        <dbReference type="ChEBI" id="CHEBI:29105"/>
    </ligand>
</feature>
<feature type="binding site" evidence="1">
    <location>
        <position position="68"/>
    </location>
    <ligand>
        <name>Zn(2+)</name>
        <dbReference type="ChEBI" id="CHEBI:29105"/>
    </ligand>
</feature>